<keyword id="KW-0028">Amino-acid biosynthesis</keyword>
<keyword id="KW-0170">Cobalt</keyword>
<keyword id="KW-0220">Diaminopimelate biosynthesis</keyword>
<keyword id="KW-0378">Hydrolase</keyword>
<keyword id="KW-0457">Lysine biosynthesis</keyword>
<keyword id="KW-0479">Metal-binding</keyword>
<keyword id="KW-0862">Zinc</keyword>
<gene>
    <name evidence="1" type="primary">dapE</name>
    <name type="ordered locus">VIBHAR_03183</name>
</gene>
<organism>
    <name type="scientific">Vibrio campbellii (strain ATCC BAA-1116)</name>
    <dbReference type="NCBI Taxonomy" id="2902295"/>
    <lineage>
        <taxon>Bacteria</taxon>
        <taxon>Pseudomonadati</taxon>
        <taxon>Pseudomonadota</taxon>
        <taxon>Gammaproteobacteria</taxon>
        <taxon>Vibrionales</taxon>
        <taxon>Vibrionaceae</taxon>
        <taxon>Vibrio</taxon>
    </lineage>
</organism>
<sequence length="378" mass="41159">MTDSPVLALAKDLISRQSVTPEDAGCQDVMIERLKALGFEIEVMVFEDTTNFWARRGTEAPLFAFAGHTDVVPAGKLEQWDTHPFEPTIIDGYLHGRGAADMKGSLACMVVAVERFIAENPDHKGSIGFLITSDEEGPFINGTVRVVETLMDRGENIDMCIVGEPSSTEVVGDVVKNGRRGSITGDLTVKGTQGHVAYPHLANNPVHQSLMAIHELATTEWDQGNDYFPPTSFQIPNVSAGTGASNVIPGEFNVQFNLRFSTELSNEVIVQRITETLDKHELDYDLKWTFNGDPFLTDTGALLDAVVAAVDEVNSTKPALLTTGGTSDGRFIARMGGQVVELGPVNATIHKVNECVKVDDLEKLTDMYENTLKHLLAK</sequence>
<reference key="1">
    <citation type="submission" date="2007-08" db="EMBL/GenBank/DDBJ databases">
        <authorList>
            <consortium name="The Vibrio harveyi Genome Sequencing Project"/>
            <person name="Bassler B."/>
            <person name="Clifton S.W."/>
            <person name="Fulton L."/>
            <person name="Delehaunty K."/>
            <person name="Fronick C."/>
            <person name="Harrison M."/>
            <person name="Markivic C."/>
            <person name="Fulton R."/>
            <person name="Tin-Wollam A.-M."/>
            <person name="Shah N."/>
            <person name="Pepin K."/>
            <person name="Nash W."/>
            <person name="Thiruvilangam P."/>
            <person name="Bhonagiri V."/>
            <person name="Waters C."/>
            <person name="Tu K.C."/>
            <person name="Irgon J."/>
            <person name="Wilson R.K."/>
        </authorList>
    </citation>
    <scope>NUCLEOTIDE SEQUENCE [LARGE SCALE GENOMIC DNA]</scope>
    <source>
        <strain>ATCC BAA-1116 / BB120</strain>
    </source>
</reference>
<proteinExistence type="inferred from homology"/>
<accession>A7MY37</accession>
<comment type="function">
    <text evidence="1">Catalyzes the hydrolysis of N-succinyl-L,L-diaminopimelic acid (SDAP), forming succinate and LL-2,6-diaminopimelate (DAP), an intermediate involved in the bacterial biosynthesis of lysine and meso-diaminopimelic acid, an essential component of bacterial cell walls.</text>
</comment>
<comment type="catalytic activity">
    <reaction evidence="1">
        <text>N-succinyl-(2S,6S)-2,6-diaminopimelate + H2O = (2S,6S)-2,6-diaminopimelate + succinate</text>
        <dbReference type="Rhea" id="RHEA:22608"/>
        <dbReference type="ChEBI" id="CHEBI:15377"/>
        <dbReference type="ChEBI" id="CHEBI:30031"/>
        <dbReference type="ChEBI" id="CHEBI:57609"/>
        <dbReference type="ChEBI" id="CHEBI:58087"/>
        <dbReference type="EC" id="3.5.1.18"/>
    </reaction>
</comment>
<comment type="cofactor">
    <cofactor evidence="1">
        <name>Zn(2+)</name>
        <dbReference type="ChEBI" id="CHEBI:29105"/>
    </cofactor>
    <cofactor evidence="1">
        <name>Co(2+)</name>
        <dbReference type="ChEBI" id="CHEBI:48828"/>
    </cofactor>
    <text evidence="1">Binds 2 Zn(2+) or Co(2+) ions per subunit.</text>
</comment>
<comment type="pathway">
    <text evidence="1">Amino-acid biosynthesis; L-lysine biosynthesis via DAP pathway; LL-2,6-diaminopimelate from (S)-tetrahydrodipicolinate (succinylase route): step 3/3.</text>
</comment>
<comment type="subunit">
    <text evidence="1">Homodimer.</text>
</comment>
<comment type="similarity">
    <text evidence="1">Belongs to the peptidase M20A family. DapE subfamily.</text>
</comment>
<evidence type="ECO:0000255" key="1">
    <source>
        <dbReference type="HAMAP-Rule" id="MF_01690"/>
    </source>
</evidence>
<name>DAPE_VIBC1</name>
<protein>
    <recommendedName>
        <fullName evidence="1">Succinyl-diaminopimelate desuccinylase</fullName>
        <shortName evidence="1">SDAP desuccinylase</shortName>
        <ecNumber evidence="1">3.5.1.18</ecNumber>
    </recommendedName>
    <alternativeName>
        <fullName evidence="1">N-succinyl-LL-2,6-diaminoheptanedioate amidohydrolase</fullName>
    </alternativeName>
</protein>
<dbReference type="EC" id="3.5.1.18" evidence="1"/>
<dbReference type="EMBL" id="CP000789">
    <property type="protein sequence ID" value="ABU72132.1"/>
    <property type="molecule type" value="Genomic_DNA"/>
</dbReference>
<dbReference type="RefSeq" id="WP_010650096.1">
    <property type="nucleotide sequence ID" value="NC_022269.1"/>
</dbReference>
<dbReference type="SMR" id="A7MY37"/>
<dbReference type="KEGG" id="vha:VIBHAR_03183"/>
<dbReference type="PATRIC" id="fig|338187.25.peg.3006"/>
<dbReference type="UniPathway" id="UPA00034">
    <property type="reaction ID" value="UER00021"/>
</dbReference>
<dbReference type="Proteomes" id="UP000008152">
    <property type="component" value="Chromosome I"/>
</dbReference>
<dbReference type="GO" id="GO:0008777">
    <property type="term" value="F:acetylornithine deacetylase activity"/>
    <property type="evidence" value="ECO:0007669"/>
    <property type="project" value="TreeGrafter"/>
</dbReference>
<dbReference type="GO" id="GO:0050897">
    <property type="term" value="F:cobalt ion binding"/>
    <property type="evidence" value="ECO:0007669"/>
    <property type="project" value="UniProtKB-UniRule"/>
</dbReference>
<dbReference type="GO" id="GO:0009014">
    <property type="term" value="F:succinyl-diaminopimelate desuccinylase activity"/>
    <property type="evidence" value="ECO:0007669"/>
    <property type="project" value="UniProtKB-UniRule"/>
</dbReference>
<dbReference type="GO" id="GO:0008270">
    <property type="term" value="F:zinc ion binding"/>
    <property type="evidence" value="ECO:0007669"/>
    <property type="project" value="UniProtKB-UniRule"/>
</dbReference>
<dbReference type="GO" id="GO:0019877">
    <property type="term" value="P:diaminopimelate biosynthetic process"/>
    <property type="evidence" value="ECO:0007669"/>
    <property type="project" value="UniProtKB-UniRule"/>
</dbReference>
<dbReference type="GO" id="GO:0006526">
    <property type="term" value="P:L-arginine biosynthetic process"/>
    <property type="evidence" value="ECO:0007669"/>
    <property type="project" value="TreeGrafter"/>
</dbReference>
<dbReference type="GO" id="GO:0009089">
    <property type="term" value="P:lysine biosynthetic process via diaminopimelate"/>
    <property type="evidence" value="ECO:0007669"/>
    <property type="project" value="UniProtKB-UniRule"/>
</dbReference>
<dbReference type="CDD" id="cd03891">
    <property type="entry name" value="M20_DapE_proteobac"/>
    <property type="match status" value="1"/>
</dbReference>
<dbReference type="FunFam" id="3.30.70.360:FF:000011">
    <property type="entry name" value="Succinyl-diaminopimelate desuccinylase"/>
    <property type="match status" value="1"/>
</dbReference>
<dbReference type="FunFam" id="3.40.630.10:FF:000005">
    <property type="entry name" value="Succinyl-diaminopimelate desuccinylase"/>
    <property type="match status" value="1"/>
</dbReference>
<dbReference type="Gene3D" id="3.40.630.10">
    <property type="entry name" value="Zn peptidases"/>
    <property type="match status" value="2"/>
</dbReference>
<dbReference type="HAMAP" id="MF_01690">
    <property type="entry name" value="DapE"/>
    <property type="match status" value="1"/>
</dbReference>
<dbReference type="InterPro" id="IPR001261">
    <property type="entry name" value="ArgE/DapE_CS"/>
</dbReference>
<dbReference type="InterPro" id="IPR036264">
    <property type="entry name" value="Bact_exopeptidase_dim_dom"/>
</dbReference>
<dbReference type="InterPro" id="IPR005941">
    <property type="entry name" value="DapE_proteobac"/>
</dbReference>
<dbReference type="InterPro" id="IPR002933">
    <property type="entry name" value="Peptidase_M20"/>
</dbReference>
<dbReference type="InterPro" id="IPR011650">
    <property type="entry name" value="Peptidase_M20_dimer"/>
</dbReference>
<dbReference type="InterPro" id="IPR050072">
    <property type="entry name" value="Peptidase_M20A"/>
</dbReference>
<dbReference type="NCBIfam" id="TIGR01246">
    <property type="entry name" value="dapE_proteo"/>
    <property type="match status" value="1"/>
</dbReference>
<dbReference type="NCBIfam" id="NF009557">
    <property type="entry name" value="PRK13009.1"/>
    <property type="match status" value="1"/>
</dbReference>
<dbReference type="PANTHER" id="PTHR43808">
    <property type="entry name" value="ACETYLORNITHINE DEACETYLASE"/>
    <property type="match status" value="1"/>
</dbReference>
<dbReference type="PANTHER" id="PTHR43808:SF31">
    <property type="entry name" value="N-ACETYL-L-CITRULLINE DEACETYLASE"/>
    <property type="match status" value="1"/>
</dbReference>
<dbReference type="Pfam" id="PF07687">
    <property type="entry name" value="M20_dimer"/>
    <property type="match status" value="1"/>
</dbReference>
<dbReference type="Pfam" id="PF01546">
    <property type="entry name" value="Peptidase_M20"/>
    <property type="match status" value="1"/>
</dbReference>
<dbReference type="SUPFAM" id="SSF55031">
    <property type="entry name" value="Bacterial exopeptidase dimerisation domain"/>
    <property type="match status" value="1"/>
</dbReference>
<dbReference type="SUPFAM" id="SSF53187">
    <property type="entry name" value="Zn-dependent exopeptidases"/>
    <property type="match status" value="1"/>
</dbReference>
<dbReference type="PROSITE" id="PS00759">
    <property type="entry name" value="ARGE_DAPE_CPG2_2"/>
    <property type="match status" value="1"/>
</dbReference>
<feature type="chain" id="PRO_0000375770" description="Succinyl-diaminopimelate desuccinylase">
    <location>
        <begin position="1"/>
        <end position="378"/>
    </location>
</feature>
<feature type="active site" evidence="1">
    <location>
        <position position="70"/>
    </location>
</feature>
<feature type="active site" description="Proton acceptor" evidence="1">
    <location>
        <position position="135"/>
    </location>
</feature>
<feature type="binding site" evidence="1">
    <location>
        <position position="68"/>
    </location>
    <ligand>
        <name>Zn(2+)</name>
        <dbReference type="ChEBI" id="CHEBI:29105"/>
        <label>1</label>
    </ligand>
</feature>
<feature type="binding site" evidence="1">
    <location>
        <position position="101"/>
    </location>
    <ligand>
        <name>Zn(2+)</name>
        <dbReference type="ChEBI" id="CHEBI:29105"/>
        <label>1</label>
    </ligand>
</feature>
<feature type="binding site" evidence="1">
    <location>
        <position position="101"/>
    </location>
    <ligand>
        <name>Zn(2+)</name>
        <dbReference type="ChEBI" id="CHEBI:29105"/>
        <label>2</label>
    </ligand>
</feature>
<feature type="binding site" evidence="1">
    <location>
        <position position="136"/>
    </location>
    <ligand>
        <name>Zn(2+)</name>
        <dbReference type="ChEBI" id="CHEBI:29105"/>
        <label>2</label>
    </ligand>
</feature>
<feature type="binding site" evidence="1">
    <location>
        <position position="164"/>
    </location>
    <ligand>
        <name>Zn(2+)</name>
        <dbReference type="ChEBI" id="CHEBI:29105"/>
        <label>1</label>
    </ligand>
</feature>
<feature type="binding site" evidence="1">
    <location>
        <position position="350"/>
    </location>
    <ligand>
        <name>Zn(2+)</name>
        <dbReference type="ChEBI" id="CHEBI:29105"/>
        <label>2</label>
    </ligand>
</feature>